<sequence length="254" mass="28916">MIKPIIVGNWKLNGSKKLIESFLKQLNQFLIKYYKICTVVIAPPVLYSHLIQNMFSSDKKNFFLGAQNIDIHFSGPFTGEISPIMLKDIGIKYVIIGHSERRLNHKETNEIIAKKFCMLKEENLVPILCIGETKKEKIDKKTKDICKKQIDIIFNMYGSNAFDNSIIAYEPIWSIGSGNSAAPKEVQCIAHFIRNYVKSKSNHNIENFFIQYGGSVTKNNAKELIYQKDIDGFLVGGASLQLEEFSKIIEITNI</sequence>
<organism>
    <name type="scientific">Buchnera aphidicola subsp. Cinara cedri (strain Cc)</name>
    <dbReference type="NCBI Taxonomy" id="372461"/>
    <lineage>
        <taxon>Bacteria</taxon>
        <taxon>Pseudomonadati</taxon>
        <taxon>Pseudomonadota</taxon>
        <taxon>Gammaproteobacteria</taxon>
        <taxon>Enterobacterales</taxon>
        <taxon>Erwiniaceae</taxon>
        <taxon>Buchnera</taxon>
    </lineage>
</organism>
<protein>
    <recommendedName>
        <fullName evidence="1">Triosephosphate isomerase</fullName>
        <shortName evidence="1">TIM</shortName>
        <shortName evidence="1">TPI</shortName>
        <ecNumber evidence="1">5.3.1.1</ecNumber>
    </recommendedName>
    <alternativeName>
        <fullName evidence="1">Triose-phosphate isomerase</fullName>
    </alternativeName>
</protein>
<feature type="chain" id="PRO_0000307442" description="Triosephosphate isomerase">
    <location>
        <begin position="1"/>
        <end position="254"/>
    </location>
</feature>
<feature type="active site" description="Electrophile" evidence="1">
    <location>
        <position position="98"/>
    </location>
</feature>
<feature type="active site" description="Proton acceptor" evidence="1">
    <location>
        <position position="170"/>
    </location>
</feature>
<feature type="binding site" evidence="1">
    <location>
        <begin position="9"/>
        <end position="11"/>
    </location>
    <ligand>
        <name>substrate</name>
    </ligand>
</feature>
<feature type="binding site" evidence="1">
    <location>
        <position position="176"/>
    </location>
    <ligand>
        <name>substrate</name>
    </ligand>
</feature>
<feature type="binding site" evidence="1">
    <location>
        <position position="215"/>
    </location>
    <ligand>
        <name>substrate</name>
    </ligand>
</feature>
<feature type="binding site" evidence="1">
    <location>
        <begin position="236"/>
        <end position="237"/>
    </location>
    <ligand>
        <name>substrate</name>
    </ligand>
</feature>
<keyword id="KW-0963">Cytoplasm</keyword>
<keyword id="KW-0312">Gluconeogenesis</keyword>
<keyword id="KW-0324">Glycolysis</keyword>
<keyword id="KW-0413">Isomerase</keyword>
<keyword id="KW-1185">Reference proteome</keyword>
<reference key="1">
    <citation type="journal article" date="2006" name="Science">
        <title>A small microbial genome: the end of a long symbiotic relationship?</title>
        <authorList>
            <person name="Perez-Brocal V."/>
            <person name="Gil R."/>
            <person name="Ramos S."/>
            <person name="Lamelas A."/>
            <person name="Postigo M."/>
            <person name="Michelena J.M."/>
            <person name="Silva F.J."/>
            <person name="Moya A."/>
            <person name="Latorre A."/>
        </authorList>
    </citation>
    <scope>NUCLEOTIDE SEQUENCE [LARGE SCALE GENOMIC DNA]</scope>
    <source>
        <strain>Cc</strain>
    </source>
</reference>
<evidence type="ECO:0000255" key="1">
    <source>
        <dbReference type="HAMAP-Rule" id="MF_00147"/>
    </source>
</evidence>
<name>TPIS_BUCCC</name>
<comment type="function">
    <text evidence="1">Involved in the gluconeogenesis. Catalyzes stereospecifically the conversion of dihydroxyacetone phosphate (DHAP) to D-glyceraldehyde-3-phosphate (G3P).</text>
</comment>
<comment type="catalytic activity">
    <reaction evidence="1">
        <text>D-glyceraldehyde 3-phosphate = dihydroxyacetone phosphate</text>
        <dbReference type="Rhea" id="RHEA:18585"/>
        <dbReference type="ChEBI" id="CHEBI:57642"/>
        <dbReference type="ChEBI" id="CHEBI:59776"/>
        <dbReference type="EC" id="5.3.1.1"/>
    </reaction>
</comment>
<comment type="pathway">
    <text evidence="1">Carbohydrate biosynthesis; gluconeogenesis.</text>
</comment>
<comment type="pathway">
    <text evidence="1">Carbohydrate degradation; glycolysis; D-glyceraldehyde 3-phosphate from glycerone phosphate: step 1/1.</text>
</comment>
<comment type="subunit">
    <text evidence="1">Homodimer.</text>
</comment>
<comment type="subcellular location">
    <subcellularLocation>
        <location evidence="1">Cytoplasm</location>
    </subcellularLocation>
</comment>
<comment type="similarity">
    <text evidence="1">Belongs to the triosephosphate isomerase family.</text>
</comment>
<gene>
    <name evidence="1" type="primary">tpiA</name>
    <name type="ordered locus">BCc_188</name>
</gene>
<dbReference type="EC" id="5.3.1.1" evidence="1"/>
<dbReference type="EMBL" id="CP000263">
    <property type="protein sequence ID" value="ABJ90660.1"/>
    <property type="molecule type" value="Genomic_DNA"/>
</dbReference>
<dbReference type="RefSeq" id="WP_011672579.1">
    <property type="nucleotide sequence ID" value="NC_008513.1"/>
</dbReference>
<dbReference type="SMR" id="Q057N9"/>
<dbReference type="STRING" id="372461.BCc_188"/>
<dbReference type="KEGG" id="bcc:BCc_188"/>
<dbReference type="eggNOG" id="COG0149">
    <property type="taxonomic scope" value="Bacteria"/>
</dbReference>
<dbReference type="HOGENOM" id="CLU_024251_2_1_6"/>
<dbReference type="OrthoDB" id="9809429at2"/>
<dbReference type="UniPathway" id="UPA00109">
    <property type="reaction ID" value="UER00189"/>
</dbReference>
<dbReference type="UniPathway" id="UPA00138"/>
<dbReference type="Proteomes" id="UP000000669">
    <property type="component" value="Chromosome"/>
</dbReference>
<dbReference type="GO" id="GO:0005829">
    <property type="term" value="C:cytosol"/>
    <property type="evidence" value="ECO:0007669"/>
    <property type="project" value="TreeGrafter"/>
</dbReference>
<dbReference type="GO" id="GO:0004807">
    <property type="term" value="F:triose-phosphate isomerase activity"/>
    <property type="evidence" value="ECO:0007669"/>
    <property type="project" value="UniProtKB-UniRule"/>
</dbReference>
<dbReference type="GO" id="GO:0006094">
    <property type="term" value="P:gluconeogenesis"/>
    <property type="evidence" value="ECO:0007669"/>
    <property type="project" value="UniProtKB-UniRule"/>
</dbReference>
<dbReference type="GO" id="GO:0046166">
    <property type="term" value="P:glyceraldehyde-3-phosphate biosynthetic process"/>
    <property type="evidence" value="ECO:0007669"/>
    <property type="project" value="TreeGrafter"/>
</dbReference>
<dbReference type="GO" id="GO:0019563">
    <property type="term" value="P:glycerol catabolic process"/>
    <property type="evidence" value="ECO:0007669"/>
    <property type="project" value="TreeGrafter"/>
</dbReference>
<dbReference type="GO" id="GO:0006096">
    <property type="term" value="P:glycolytic process"/>
    <property type="evidence" value="ECO:0007669"/>
    <property type="project" value="UniProtKB-UniRule"/>
</dbReference>
<dbReference type="CDD" id="cd00311">
    <property type="entry name" value="TIM"/>
    <property type="match status" value="1"/>
</dbReference>
<dbReference type="FunFam" id="3.20.20.70:FF:000016">
    <property type="entry name" value="Triosephosphate isomerase"/>
    <property type="match status" value="1"/>
</dbReference>
<dbReference type="Gene3D" id="3.20.20.70">
    <property type="entry name" value="Aldolase class I"/>
    <property type="match status" value="1"/>
</dbReference>
<dbReference type="HAMAP" id="MF_00147_B">
    <property type="entry name" value="TIM_B"/>
    <property type="match status" value="1"/>
</dbReference>
<dbReference type="InterPro" id="IPR013785">
    <property type="entry name" value="Aldolase_TIM"/>
</dbReference>
<dbReference type="InterPro" id="IPR035990">
    <property type="entry name" value="TIM_sf"/>
</dbReference>
<dbReference type="InterPro" id="IPR022896">
    <property type="entry name" value="TrioseP_Isoase_bac/euk"/>
</dbReference>
<dbReference type="InterPro" id="IPR000652">
    <property type="entry name" value="Triosephosphate_isomerase"/>
</dbReference>
<dbReference type="InterPro" id="IPR020861">
    <property type="entry name" value="Triosephosphate_isomerase_AS"/>
</dbReference>
<dbReference type="NCBIfam" id="TIGR00419">
    <property type="entry name" value="tim"/>
    <property type="match status" value="1"/>
</dbReference>
<dbReference type="PANTHER" id="PTHR21139">
    <property type="entry name" value="TRIOSEPHOSPHATE ISOMERASE"/>
    <property type="match status" value="1"/>
</dbReference>
<dbReference type="PANTHER" id="PTHR21139:SF42">
    <property type="entry name" value="TRIOSEPHOSPHATE ISOMERASE"/>
    <property type="match status" value="1"/>
</dbReference>
<dbReference type="Pfam" id="PF00121">
    <property type="entry name" value="TIM"/>
    <property type="match status" value="1"/>
</dbReference>
<dbReference type="SUPFAM" id="SSF51351">
    <property type="entry name" value="Triosephosphate isomerase (TIM)"/>
    <property type="match status" value="1"/>
</dbReference>
<dbReference type="PROSITE" id="PS00171">
    <property type="entry name" value="TIM_1"/>
    <property type="match status" value="1"/>
</dbReference>
<dbReference type="PROSITE" id="PS51440">
    <property type="entry name" value="TIM_2"/>
    <property type="match status" value="1"/>
</dbReference>
<accession>Q057N9</accession>
<proteinExistence type="inferred from homology"/>